<name>GSHB_PARMW</name>
<proteinExistence type="inferred from homology"/>
<accession>Q7U3W8</accession>
<feature type="chain" id="PRO_0000197489" description="Glutathione synthetase">
    <location>
        <begin position="1"/>
        <end position="307"/>
    </location>
</feature>
<feature type="domain" description="ATP-grasp" evidence="2">
    <location>
        <begin position="120"/>
        <end position="304"/>
    </location>
</feature>
<feature type="binding site" evidence="2">
    <location>
        <begin position="146"/>
        <end position="202"/>
    </location>
    <ligand>
        <name>ATP</name>
        <dbReference type="ChEBI" id="CHEBI:30616"/>
    </ligand>
</feature>
<feature type="binding site" evidence="2">
    <location>
        <position position="275"/>
    </location>
    <ligand>
        <name>Mg(2+)</name>
        <dbReference type="ChEBI" id="CHEBI:18420"/>
    </ligand>
</feature>
<feature type="binding site" evidence="2">
    <location>
        <position position="277"/>
    </location>
    <ligand>
        <name>Mg(2+)</name>
        <dbReference type="ChEBI" id="CHEBI:18420"/>
    </ligand>
</feature>
<reference key="1">
    <citation type="journal article" date="2003" name="Nature">
        <title>The genome of a motile marine Synechococcus.</title>
        <authorList>
            <person name="Palenik B."/>
            <person name="Brahamsha B."/>
            <person name="Larimer F.W."/>
            <person name="Land M.L."/>
            <person name="Hauser L."/>
            <person name="Chain P."/>
            <person name="Lamerdin J.E."/>
            <person name="Regala W."/>
            <person name="Allen E.E."/>
            <person name="McCarren J."/>
            <person name="Paulsen I.T."/>
            <person name="Dufresne A."/>
            <person name="Partensky F."/>
            <person name="Webb E.A."/>
            <person name="Waterbury J."/>
        </authorList>
    </citation>
    <scope>NUCLEOTIDE SEQUENCE [LARGE SCALE GENOMIC DNA]</scope>
    <source>
        <strain>WH8102</strain>
    </source>
</reference>
<evidence type="ECO:0000250" key="1"/>
<evidence type="ECO:0000255" key="2">
    <source>
        <dbReference type="HAMAP-Rule" id="MF_00162"/>
    </source>
</evidence>
<dbReference type="EC" id="6.3.2.3" evidence="2"/>
<dbReference type="EMBL" id="BX569695">
    <property type="protein sequence ID" value="CAE08824.1"/>
    <property type="molecule type" value="Genomic_DNA"/>
</dbReference>
<dbReference type="RefSeq" id="WP_011129162.1">
    <property type="nucleotide sequence ID" value="NC_005070.1"/>
</dbReference>
<dbReference type="SMR" id="Q7U3W8"/>
<dbReference type="STRING" id="84588.SYNW2309"/>
<dbReference type="KEGG" id="syw:SYNW2309"/>
<dbReference type="eggNOG" id="COG0189">
    <property type="taxonomic scope" value="Bacteria"/>
</dbReference>
<dbReference type="HOGENOM" id="CLU_068239_0_0_3"/>
<dbReference type="UniPathway" id="UPA00142">
    <property type="reaction ID" value="UER00210"/>
</dbReference>
<dbReference type="Proteomes" id="UP000001422">
    <property type="component" value="Chromosome"/>
</dbReference>
<dbReference type="GO" id="GO:0005737">
    <property type="term" value="C:cytoplasm"/>
    <property type="evidence" value="ECO:0007669"/>
    <property type="project" value="TreeGrafter"/>
</dbReference>
<dbReference type="GO" id="GO:0005524">
    <property type="term" value="F:ATP binding"/>
    <property type="evidence" value="ECO:0007669"/>
    <property type="project" value="UniProtKB-UniRule"/>
</dbReference>
<dbReference type="GO" id="GO:0004363">
    <property type="term" value="F:glutathione synthase activity"/>
    <property type="evidence" value="ECO:0007669"/>
    <property type="project" value="UniProtKB-UniRule"/>
</dbReference>
<dbReference type="GO" id="GO:0046872">
    <property type="term" value="F:metal ion binding"/>
    <property type="evidence" value="ECO:0007669"/>
    <property type="project" value="UniProtKB-KW"/>
</dbReference>
<dbReference type="Gene3D" id="3.40.50.20">
    <property type="match status" value="1"/>
</dbReference>
<dbReference type="Gene3D" id="3.30.1490.20">
    <property type="entry name" value="ATP-grasp fold, A domain"/>
    <property type="match status" value="1"/>
</dbReference>
<dbReference type="Gene3D" id="3.30.470.20">
    <property type="entry name" value="ATP-grasp fold, B domain"/>
    <property type="match status" value="1"/>
</dbReference>
<dbReference type="HAMAP" id="MF_00162">
    <property type="entry name" value="GSH_S"/>
    <property type="match status" value="1"/>
</dbReference>
<dbReference type="InterPro" id="IPR011761">
    <property type="entry name" value="ATP-grasp"/>
</dbReference>
<dbReference type="InterPro" id="IPR013815">
    <property type="entry name" value="ATP_grasp_subdomain_1"/>
</dbReference>
<dbReference type="InterPro" id="IPR006284">
    <property type="entry name" value="Glut_synth_pro"/>
</dbReference>
<dbReference type="InterPro" id="IPR004218">
    <property type="entry name" value="GSHS_ATP-bd"/>
</dbReference>
<dbReference type="InterPro" id="IPR004215">
    <property type="entry name" value="GSHS_N"/>
</dbReference>
<dbReference type="InterPro" id="IPR016185">
    <property type="entry name" value="PreATP-grasp_dom_sf"/>
</dbReference>
<dbReference type="NCBIfam" id="TIGR01380">
    <property type="entry name" value="glut_syn"/>
    <property type="match status" value="1"/>
</dbReference>
<dbReference type="NCBIfam" id="NF003573">
    <property type="entry name" value="PRK05246.1"/>
    <property type="match status" value="1"/>
</dbReference>
<dbReference type="PANTHER" id="PTHR21621:SF4">
    <property type="entry name" value="GLUTATHIONE SYNTHETASE"/>
    <property type="match status" value="1"/>
</dbReference>
<dbReference type="PANTHER" id="PTHR21621">
    <property type="entry name" value="RIBOSOMAL PROTEIN S6 MODIFICATION PROTEIN"/>
    <property type="match status" value="1"/>
</dbReference>
<dbReference type="Pfam" id="PF02955">
    <property type="entry name" value="GSH-S_ATP"/>
    <property type="match status" value="1"/>
</dbReference>
<dbReference type="Pfam" id="PF02951">
    <property type="entry name" value="GSH-S_N"/>
    <property type="match status" value="1"/>
</dbReference>
<dbReference type="SUPFAM" id="SSF56059">
    <property type="entry name" value="Glutathione synthetase ATP-binding domain-like"/>
    <property type="match status" value="1"/>
</dbReference>
<dbReference type="SUPFAM" id="SSF52440">
    <property type="entry name" value="PreATP-grasp domain"/>
    <property type="match status" value="1"/>
</dbReference>
<dbReference type="PROSITE" id="PS50975">
    <property type="entry name" value="ATP_GRASP"/>
    <property type="match status" value="1"/>
</dbReference>
<gene>
    <name evidence="2" type="primary">gshB</name>
    <name type="ordered locus">SYNW2309</name>
</gene>
<comment type="catalytic activity">
    <reaction evidence="2">
        <text>gamma-L-glutamyl-L-cysteine + glycine + ATP = glutathione + ADP + phosphate + H(+)</text>
        <dbReference type="Rhea" id="RHEA:13557"/>
        <dbReference type="ChEBI" id="CHEBI:15378"/>
        <dbReference type="ChEBI" id="CHEBI:30616"/>
        <dbReference type="ChEBI" id="CHEBI:43474"/>
        <dbReference type="ChEBI" id="CHEBI:57305"/>
        <dbReference type="ChEBI" id="CHEBI:57925"/>
        <dbReference type="ChEBI" id="CHEBI:58173"/>
        <dbReference type="ChEBI" id="CHEBI:456216"/>
        <dbReference type="EC" id="6.3.2.3"/>
    </reaction>
</comment>
<comment type="cofactor">
    <cofactor evidence="1">
        <name>Mg(2+)</name>
        <dbReference type="ChEBI" id="CHEBI:18420"/>
    </cofactor>
    <cofactor evidence="1">
        <name>Mn(2+)</name>
        <dbReference type="ChEBI" id="CHEBI:29035"/>
    </cofactor>
    <text evidence="1">Binds 1 Mg(2+) or Mn(2+) ion per subunit.</text>
</comment>
<comment type="pathway">
    <text evidence="2">Sulfur metabolism; glutathione biosynthesis; glutathione from L-cysteine and L-glutamate: step 2/2.</text>
</comment>
<comment type="similarity">
    <text evidence="2">Belongs to the prokaryotic GSH synthase family.</text>
</comment>
<protein>
    <recommendedName>
        <fullName evidence="2">Glutathione synthetase</fullName>
        <ecNumber evidence="2">6.3.2.3</ecNumber>
    </recommendedName>
    <alternativeName>
        <fullName evidence="2">GSH synthetase</fullName>
        <shortName evidence="2">GSH-S</shortName>
        <shortName evidence="2">GSHase</shortName>
    </alternativeName>
    <alternativeName>
        <fullName evidence="2">Glutathione synthase</fullName>
    </alternativeName>
</protein>
<organism>
    <name type="scientific">Parasynechococcus marenigrum (strain WH8102)</name>
    <dbReference type="NCBI Taxonomy" id="84588"/>
    <lineage>
        <taxon>Bacteria</taxon>
        <taxon>Bacillati</taxon>
        <taxon>Cyanobacteriota</taxon>
        <taxon>Cyanophyceae</taxon>
        <taxon>Synechococcales</taxon>
        <taxon>Prochlorococcaceae</taxon>
        <taxon>Parasynechococcus</taxon>
        <taxon>Parasynechococcus marenigrum</taxon>
    </lineage>
</organism>
<keyword id="KW-0067">ATP-binding</keyword>
<keyword id="KW-0317">Glutathione biosynthesis</keyword>
<keyword id="KW-0436">Ligase</keyword>
<keyword id="KW-0460">Magnesium</keyword>
<keyword id="KW-0464">Manganese</keyword>
<keyword id="KW-0479">Metal-binding</keyword>
<keyword id="KW-0547">Nucleotide-binding</keyword>
<sequence length="307" mass="33471">MRQLFVLDPLSQIRPEKDSTAALMQAAQRAGDDIWSCTPSDLIARGDEPMAVALPVTPDPWIAVGAPERQSLAGFDVIWMRKDPPVDEAYLYATHLLEVAERAGVRVLNRPSALRAWNEKLGALRFSRWMAPTLVAGRVSELMAFAREQGDVVLKPLGGRAGLGVIRVQAEAPGLKALLELVTEQERLPVMAQRFLPDVTEGDKRILLVDGDPLGAVNRRPSEGEFRSNLAVGGQAEATELSEPERQICAALAPALRAEGLFFVGIDVIGGMLSEINVTSPTGVREVERLMQEPLADQTIERLRSLV</sequence>